<name>OPRD_HUMAN</name>
<keyword id="KW-0002">3D-structure</keyword>
<keyword id="KW-1003">Cell membrane</keyword>
<keyword id="KW-1015">Disulfide bond</keyword>
<keyword id="KW-0297">G-protein coupled receptor</keyword>
<keyword id="KW-0325">Glycoprotein</keyword>
<keyword id="KW-0449">Lipoprotein</keyword>
<keyword id="KW-0472">Membrane</keyword>
<keyword id="KW-0564">Palmitate</keyword>
<keyword id="KW-1267">Proteomics identification</keyword>
<keyword id="KW-0675">Receptor</keyword>
<keyword id="KW-1185">Reference proteome</keyword>
<keyword id="KW-0807">Transducer</keyword>
<keyword id="KW-0812">Transmembrane</keyword>
<keyword id="KW-1133">Transmembrane helix</keyword>
<keyword id="KW-0832">Ubl conjugation</keyword>
<reference key="1">
    <citation type="journal article" date="1994" name="Life Sci.">
        <title>Identification of a human delta opioid receptor: cloning and expression.</title>
        <authorList>
            <person name="Knapp R.J."/>
            <person name="Malatynska E."/>
            <person name="Fang L."/>
            <person name="Li X."/>
            <person name="Babin E."/>
            <person name="Nguyen M."/>
            <person name="Santoro G."/>
            <person name="Varga E.V."/>
            <person name="Hruby V.J."/>
            <person name="Roeske W.R."/>
            <person name="Yamamura H.I."/>
        </authorList>
    </citation>
    <scope>NUCLEOTIDE SEQUENCE [MRNA]</scope>
    <scope>FUNCTION</scope>
    <scope>SUBCELLULAR LOCATION</scope>
    <scope>VARIANT PHE-27</scope>
    <source>
        <tissue>Brain cortex</tissue>
        <tissue>Corpus striatum</tissue>
    </source>
</reference>
<reference key="2">
    <citation type="submission" date="2003-01" db="EMBL/GenBank/DDBJ databases">
        <authorList>
            <person name="Knapp R.J."/>
        </authorList>
    </citation>
    <scope>SEQUENCE REVISION TO 40-41; 348 AND 370</scope>
</reference>
<reference key="3">
    <citation type="journal article" date="1994" name="Mol. Pharmacol.">
        <title>The human delta-opioid receptor: genomic organization, cDNA cloning, functional expression, and distribution in human brain.</title>
        <authorList>
            <person name="Simonin F."/>
            <person name="Befort K."/>
            <person name="Gaveriaux-Ruff C."/>
            <person name="Matthes H."/>
            <person name="Nappey V."/>
            <person name="Lannes B."/>
            <person name="Micheletti G."/>
            <person name="Kieffer B."/>
        </authorList>
    </citation>
    <scope>NUCLEOTIDE SEQUENCE [MRNA]</scope>
    <scope>FUNCTION</scope>
    <scope>SUBCELLULAR LOCATION</scope>
    <scope>TISSUE SPECIFICITY</scope>
</reference>
<reference key="4">
    <citation type="submission" date="2008-07" db="EMBL/GenBank/DDBJ databases">
        <title>Isolation of cDNA coding for human opioid receptor, delta 1 (OPRD1).</title>
        <authorList>
            <person name="Kaighin V.A."/>
            <person name="Martin A.L."/>
            <person name="Aronstam R.S."/>
        </authorList>
    </citation>
    <scope>NUCLEOTIDE SEQUENCE [MRNA]</scope>
    <scope>VARIANT PHE-27</scope>
    <source>
        <tissue>Kidney</tissue>
    </source>
</reference>
<reference key="5">
    <citation type="journal article" date="2006" name="Nature">
        <title>The DNA sequence and biological annotation of human chromosome 1.</title>
        <authorList>
            <person name="Gregory S.G."/>
            <person name="Barlow K.F."/>
            <person name="McLay K.E."/>
            <person name="Kaul R."/>
            <person name="Swarbreck D."/>
            <person name="Dunham A."/>
            <person name="Scott C.E."/>
            <person name="Howe K.L."/>
            <person name="Woodfine K."/>
            <person name="Spencer C.C.A."/>
            <person name="Jones M.C."/>
            <person name="Gillson C."/>
            <person name="Searle S."/>
            <person name="Zhou Y."/>
            <person name="Kokocinski F."/>
            <person name="McDonald L."/>
            <person name="Evans R."/>
            <person name="Phillips K."/>
            <person name="Atkinson A."/>
            <person name="Cooper R."/>
            <person name="Jones C."/>
            <person name="Hall R.E."/>
            <person name="Andrews T.D."/>
            <person name="Lloyd C."/>
            <person name="Ainscough R."/>
            <person name="Almeida J.P."/>
            <person name="Ambrose K.D."/>
            <person name="Anderson F."/>
            <person name="Andrew R.W."/>
            <person name="Ashwell R.I.S."/>
            <person name="Aubin K."/>
            <person name="Babbage A.K."/>
            <person name="Bagguley C.L."/>
            <person name="Bailey J."/>
            <person name="Beasley H."/>
            <person name="Bethel G."/>
            <person name="Bird C.P."/>
            <person name="Bray-Allen S."/>
            <person name="Brown J.Y."/>
            <person name="Brown A.J."/>
            <person name="Buckley D."/>
            <person name="Burton J."/>
            <person name="Bye J."/>
            <person name="Carder C."/>
            <person name="Chapman J.C."/>
            <person name="Clark S.Y."/>
            <person name="Clarke G."/>
            <person name="Clee C."/>
            <person name="Cobley V."/>
            <person name="Collier R.E."/>
            <person name="Corby N."/>
            <person name="Coville G.J."/>
            <person name="Davies J."/>
            <person name="Deadman R."/>
            <person name="Dunn M."/>
            <person name="Earthrowl M."/>
            <person name="Ellington A.G."/>
            <person name="Errington H."/>
            <person name="Frankish A."/>
            <person name="Frankland J."/>
            <person name="French L."/>
            <person name="Garner P."/>
            <person name="Garnett J."/>
            <person name="Gay L."/>
            <person name="Ghori M.R.J."/>
            <person name="Gibson R."/>
            <person name="Gilby L.M."/>
            <person name="Gillett W."/>
            <person name="Glithero R.J."/>
            <person name="Grafham D.V."/>
            <person name="Griffiths C."/>
            <person name="Griffiths-Jones S."/>
            <person name="Grocock R."/>
            <person name="Hammond S."/>
            <person name="Harrison E.S.I."/>
            <person name="Hart E."/>
            <person name="Haugen E."/>
            <person name="Heath P.D."/>
            <person name="Holmes S."/>
            <person name="Holt K."/>
            <person name="Howden P.J."/>
            <person name="Hunt A.R."/>
            <person name="Hunt S.E."/>
            <person name="Hunter G."/>
            <person name="Isherwood J."/>
            <person name="James R."/>
            <person name="Johnson C."/>
            <person name="Johnson D."/>
            <person name="Joy A."/>
            <person name="Kay M."/>
            <person name="Kershaw J.K."/>
            <person name="Kibukawa M."/>
            <person name="Kimberley A.M."/>
            <person name="King A."/>
            <person name="Knights A.J."/>
            <person name="Lad H."/>
            <person name="Laird G."/>
            <person name="Lawlor S."/>
            <person name="Leongamornlert D.A."/>
            <person name="Lloyd D.M."/>
            <person name="Loveland J."/>
            <person name="Lovell J."/>
            <person name="Lush M.J."/>
            <person name="Lyne R."/>
            <person name="Martin S."/>
            <person name="Mashreghi-Mohammadi M."/>
            <person name="Matthews L."/>
            <person name="Matthews N.S.W."/>
            <person name="McLaren S."/>
            <person name="Milne S."/>
            <person name="Mistry S."/>
            <person name="Moore M.J.F."/>
            <person name="Nickerson T."/>
            <person name="O'Dell C.N."/>
            <person name="Oliver K."/>
            <person name="Palmeiri A."/>
            <person name="Palmer S.A."/>
            <person name="Parker A."/>
            <person name="Patel D."/>
            <person name="Pearce A.V."/>
            <person name="Peck A.I."/>
            <person name="Pelan S."/>
            <person name="Phelps K."/>
            <person name="Phillimore B.J."/>
            <person name="Plumb R."/>
            <person name="Rajan J."/>
            <person name="Raymond C."/>
            <person name="Rouse G."/>
            <person name="Saenphimmachak C."/>
            <person name="Sehra H.K."/>
            <person name="Sheridan E."/>
            <person name="Shownkeen R."/>
            <person name="Sims S."/>
            <person name="Skuce C.D."/>
            <person name="Smith M."/>
            <person name="Steward C."/>
            <person name="Subramanian S."/>
            <person name="Sycamore N."/>
            <person name="Tracey A."/>
            <person name="Tromans A."/>
            <person name="Van Helmond Z."/>
            <person name="Wall M."/>
            <person name="Wallis J.M."/>
            <person name="White S."/>
            <person name="Whitehead S.L."/>
            <person name="Wilkinson J.E."/>
            <person name="Willey D.L."/>
            <person name="Williams H."/>
            <person name="Wilming L."/>
            <person name="Wray P.W."/>
            <person name="Wu Z."/>
            <person name="Coulson A."/>
            <person name="Vaudin M."/>
            <person name="Sulston J.E."/>
            <person name="Durbin R.M."/>
            <person name="Hubbard T."/>
            <person name="Wooster R."/>
            <person name="Dunham I."/>
            <person name="Carter N.P."/>
            <person name="McVean G."/>
            <person name="Ross M.T."/>
            <person name="Harrow J."/>
            <person name="Olson M.V."/>
            <person name="Beck S."/>
            <person name="Rogers J."/>
            <person name="Bentley D.R."/>
        </authorList>
    </citation>
    <scope>NUCLEOTIDE SEQUENCE [LARGE SCALE GENOMIC DNA]</scope>
</reference>
<reference key="6">
    <citation type="journal article" date="2002" name="Science">
        <title>Modulation of postendocytic sorting of G protein-coupled receptors.</title>
        <authorList>
            <person name="Whistler J.L."/>
            <person name="Enquist J."/>
            <person name="Marley A."/>
            <person name="Fong J."/>
            <person name="Gladher F."/>
            <person name="Tsuruda P."/>
            <person name="Murray S.R."/>
            <person name="Von Zastrow M."/>
        </authorList>
    </citation>
    <scope>INTERACTION WITH GPRASP1</scope>
</reference>
<reference key="7">
    <citation type="journal article" date="2004" name="J. Neurochem.">
        <title>Identification of a novel family of G protein-coupled receptor associated sorting proteins.</title>
        <authorList>
            <person name="Simonin F."/>
            <person name="Karcher P."/>
            <person name="Boeuf J.J.-M."/>
            <person name="Matifas A."/>
            <person name="Kieffer B.L."/>
        </authorList>
    </citation>
    <scope>INTERACTION WITH GPRASP1</scope>
</reference>
<reference key="8">
    <citation type="journal article" date="2012" name="J. Biol. Chem.">
        <title>Cys-27 variant of human delta-opioid receptor modulates maturation and cell surface delivery of Phe-27 variant via heteromerization.</title>
        <authorList>
            <person name="Leskela T.T."/>
            <person name="Lackman J.J."/>
            <person name="Vierimaa M.M."/>
            <person name="Kobayashi H."/>
            <person name="Bouvier M."/>
            <person name="Petaja-Repo U.E."/>
        </authorList>
    </citation>
    <scope>FUNCTION</scope>
    <scope>SUBCELLULAR LOCATION</scope>
    <scope>GLYCOSYLATION</scope>
    <scope>SUBUNIT</scope>
    <scope>CHARACTERIZATION OF VARIANT PHE-27</scope>
</reference>
<reference key="9">
    <citation type="journal article" date="2012" name="Reprod. BioMed. Online">
        <title>Expression and localization of opioid receptors during the maturation of human oocytes.</title>
        <authorList>
            <person name="Agirregoitia E."/>
            <person name="Peralta L."/>
            <person name="Mendoza R."/>
            <person name="Exposito A."/>
            <person name="Ereno E.D."/>
            <person name="Matorras R."/>
            <person name="Agirregoitia N."/>
        </authorList>
    </citation>
    <scope>TISSUE SPECIFICITY</scope>
</reference>
<reference key="10">
    <citation type="journal article" date="2000" name="Hum. Genet.">
        <title>Variant detection at the delta opioid receptor (OPRD1) locus and population genetics of a novel variant affecting protein sequence.</title>
        <authorList>
            <person name="Gelernter J."/>
            <person name="Kranzler H.R."/>
        </authorList>
    </citation>
    <scope>VARIANT PHE-27</scope>
</reference>
<reference key="11">
    <citation type="journal article" date="2003" name="Nat. Struct. Biol.">
        <title>Opioid receptor random mutagenesis reveals a mechanism for G protein-coupled receptor activation.</title>
        <authorList>
            <person name="Decaillot F.M."/>
            <person name="Befort K."/>
            <person name="Filliol D."/>
            <person name="Yue S."/>
            <person name="Walker P."/>
            <person name="Kieffer B.L."/>
        </authorList>
    </citation>
    <scope>3D-STRUCTURE MODELING</scope>
</reference>
<accession>P41143</accession>
<accession>B5B0B8</accession>
<feature type="chain" id="PRO_0000069962" description="Delta-type opioid receptor">
    <location>
        <begin position="1"/>
        <end position="372"/>
    </location>
</feature>
<feature type="topological domain" description="Extracellular" evidence="1">
    <location>
        <begin position="1"/>
        <end position="47"/>
    </location>
</feature>
<feature type="transmembrane region" description="Helical; Name=1" evidence="1">
    <location>
        <begin position="48"/>
        <end position="75"/>
    </location>
</feature>
<feature type="topological domain" description="Cytoplasmic" evidence="1">
    <location>
        <begin position="76"/>
        <end position="85"/>
    </location>
</feature>
<feature type="transmembrane region" description="Helical; Name=2" evidence="1">
    <location>
        <begin position="86"/>
        <end position="110"/>
    </location>
</feature>
<feature type="topological domain" description="Extracellular" evidence="1">
    <location>
        <begin position="111"/>
        <end position="122"/>
    </location>
</feature>
<feature type="transmembrane region" description="Helical; Name=3" evidence="1">
    <location>
        <begin position="123"/>
        <end position="144"/>
    </location>
</feature>
<feature type="topological domain" description="Cytoplasmic" evidence="1">
    <location>
        <begin position="145"/>
        <end position="163"/>
    </location>
</feature>
<feature type="transmembrane region" description="Helical; Name=4" evidence="1">
    <location>
        <begin position="164"/>
        <end position="186"/>
    </location>
</feature>
<feature type="topological domain" description="Extracellular" evidence="1">
    <location>
        <begin position="187"/>
        <end position="206"/>
    </location>
</feature>
<feature type="transmembrane region" description="Helical; Name=5" evidence="1">
    <location>
        <begin position="207"/>
        <end position="238"/>
    </location>
</feature>
<feature type="topological domain" description="Cytoplasmic" evidence="1">
    <location>
        <begin position="239"/>
        <end position="261"/>
    </location>
</feature>
<feature type="transmembrane region" description="Helical; Name=6" evidence="1">
    <location>
        <begin position="262"/>
        <end position="284"/>
    </location>
</feature>
<feature type="topological domain" description="Extracellular" evidence="1">
    <location>
        <begin position="285"/>
        <end position="299"/>
    </location>
</feature>
<feature type="transmembrane region" description="Helical; Name=7" evidence="1">
    <location>
        <begin position="300"/>
        <end position="321"/>
    </location>
</feature>
<feature type="topological domain" description="Cytoplasmic" evidence="1">
    <location>
        <begin position="322"/>
        <end position="372"/>
    </location>
</feature>
<feature type="region of interest" description="Disordered" evidence="5">
    <location>
        <begin position="340"/>
        <end position="372"/>
    </location>
</feature>
<feature type="compositionally biased region" description="Basic and acidic residues" evidence="5">
    <location>
        <begin position="347"/>
        <end position="357"/>
    </location>
</feature>
<feature type="lipid moiety-binding region" description="S-palmitoyl cysteine" evidence="3">
    <location>
        <position position="333"/>
    </location>
</feature>
<feature type="glycosylation site" description="N-linked (GlcNAc...) asparagine" evidence="3">
    <location>
        <position position="18"/>
    </location>
</feature>
<feature type="glycosylation site" description="N-linked (GlcNAc...) asparagine" evidence="3">
    <location>
        <position position="33"/>
    </location>
</feature>
<feature type="disulfide bond" evidence="4">
    <location>
        <begin position="121"/>
        <end position="198"/>
    </location>
</feature>
<feature type="sequence variant" id="VAR_012083" description="Improved maturation and increased expression at the cell surface; dbSNP:rs1042114." evidence="6 9 12 13">
    <original>C</original>
    <variation>F</variation>
    <location>
        <position position="27"/>
    </location>
</feature>
<feature type="helix" evidence="14">
    <location>
        <begin position="40"/>
        <end position="76"/>
    </location>
</feature>
<feature type="helix" evidence="14">
    <location>
        <begin position="78"/>
        <end position="80"/>
    </location>
</feature>
<feature type="helix" evidence="14">
    <location>
        <begin position="83"/>
        <end position="100"/>
    </location>
</feature>
<feature type="helix" evidence="14">
    <location>
        <begin position="102"/>
        <end position="111"/>
    </location>
</feature>
<feature type="helix" evidence="14">
    <location>
        <begin position="118"/>
        <end position="151"/>
    </location>
</feature>
<feature type="turn" evidence="14">
    <location>
        <begin position="153"/>
        <end position="155"/>
    </location>
</feature>
<feature type="helix" evidence="14">
    <location>
        <begin position="156"/>
        <end position="159"/>
    </location>
</feature>
<feature type="helix" evidence="14">
    <location>
        <begin position="162"/>
        <end position="186"/>
    </location>
</feature>
<feature type="strand" evidence="14">
    <location>
        <begin position="187"/>
        <end position="192"/>
    </location>
</feature>
<feature type="strand" evidence="14">
    <location>
        <begin position="195"/>
        <end position="200"/>
    </location>
</feature>
<feature type="strand" evidence="14">
    <location>
        <begin position="203"/>
        <end position="205"/>
    </location>
</feature>
<feature type="helix" evidence="14">
    <location>
        <begin position="206"/>
        <end position="220"/>
    </location>
</feature>
<feature type="helix" evidence="14">
    <location>
        <begin position="223"/>
        <end position="242"/>
    </location>
</feature>
<feature type="strand" evidence="14">
    <location>
        <begin position="246"/>
        <end position="249"/>
    </location>
</feature>
<feature type="helix" evidence="14">
    <location>
        <begin position="250"/>
        <end position="286"/>
    </location>
</feature>
<feature type="helix" evidence="14">
    <location>
        <begin position="294"/>
        <end position="321"/>
    </location>
</feature>
<feature type="helix" evidence="14">
    <location>
        <begin position="323"/>
        <end position="334"/>
    </location>
</feature>
<dbReference type="EMBL" id="U07882">
    <property type="protein sequence ID" value="AAA18789.2"/>
    <property type="molecule type" value="mRNA"/>
</dbReference>
<dbReference type="EMBL" id="U10504">
    <property type="protein sequence ID" value="AAA83426.1"/>
    <property type="molecule type" value="mRNA"/>
</dbReference>
<dbReference type="EMBL" id="EU883570">
    <property type="protein sequence ID" value="ACG60644.1"/>
    <property type="molecule type" value="mRNA"/>
</dbReference>
<dbReference type="EMBL" id="AL009181">
    <property type="status" value="NOT_ANNOTATED_CDS"/>
    <property type="molecule type" value="Genomic_DNA"/>
</dbReference>
<dbReference type="CCDS" id="CCDS329.1"/>
<dbReference type="PIR" id="I38532">
    <property type="entry name" value="I38532"/>
</dbReference>
<dbReference type="RefSeq" id="NP_000902.3">
    <property type="nucleotide sequence ID" value="NM_000911.3"/>
</dbReference>
<dbReference type="PDB" id="4N6H">
    <property type="method" value="X-ray"/>
    <property type="resolution" value="1.80 A"/>
    <property type="chains" value="A=36-338"/>
</dbReference>
<dbReference type="PDB" id="4RWA">
    <property type="method" value="X-ray"/>
    <property type="resolution" value="3.28 A"/>
    <property type="chains" value="A/B=39-338"/>
</dbReference>
<dbReference type="PDB" id="4RWD">
    <property type="method" value="X-ray"/>
    <property type="resolution" value="2.70 A"/>
    <property type="chains" value="A/B=39-338"/>
</dbReference>
<dbReference type="PDB" id="6PT2">
    <property type="method" value="X-ray"/>
    <property type="resolution" value="2.80 A"/>
    <property type="chains" value="A/B=41-338"/>
</dbReference>
<dbReference type="PDB" id="6PT3">
    <property type="method" value="X-ray"/>
    <property type="resolution" value="3.30 A"/>
    <property type="chains" value="A/B=41-338"/>
</dbReference>
<dbReference type="PDB" id="8F7S">
    <property type="method" value="EM"/>
    <property type="resolution" value="3.00 A"/>
    <property type="chains" value="D/R=2-372"/>
</dbReference>
<dbReference type="PDB" id="8Y45">
    <property type="method" value="EM"/>
    <property type="resolution" value="3.45 A"/>
    <property type="chains" value="A=36-352"/>
</dbReference>
<dbReference type="PDBsum" id="4N6H"/>
<dbReference type="PDBsum" id="4RWA"/>
<dbReference type="PDBsum" id="4RWD"/>
<dbReference type="PDBsum" id="6PT2"/>
<dbReference type="PDBsum" id="6PT3"/>
<dbReference type="PDBsum" id="8F7S"/>
<dbReference type="PDBsum" id="8Y45"/>
<dbReference type="EMDB" id="EMD-28909"/>
<dbReference type="EMDB" id="EMD-38909"/>
<dbReference type="SMR" id="P41143"/>
<dbReference type="BioGRID" id="111030">
    <property type="interactions" value="42"/>
</dbReference>
<dbReference type="CORUM" id="P41143"/>
<dbReference type="ELM" id="P41143"/>
<dbReference type="FunCoup" id="P41143">
    <property type="interactions" value="1033"/>
</dbReference>
<dbReference type="IntAct" id="P41143">
    <property type="interactions" value="10"/>
</dbReference>
<dbReference type="MINT" id="P41143"/>
<dbReference type="STRING" id="9606.ENSP00000234961"/>
<dbReference type="BindingDB" id="P41143"/>
<dbReference type="ChEMBL" id="CHEMBL236"/>
<dbReference type="DrugBank" id="DB01571">
    <property type="generic name" value="3-Methylfentanyl"/>
</dbReference>
<dbReference type="DrugBank" id="DB01439">
    <property type="generic name" value="3-Methylthiofentanyl"/>
</dbReference>
<dbReference type="DrugBank" id="DB05050">
    <property type="generic name" value="ADL5859"/>
</dbReference>
<dbReference type="DrugBank" id="DB06274">
    <property type="generic name" value="Alvimopan"/>
</dbReference>
<dbReference type="DrugBank" id="DB06288">
    <property type="generic name" value="Amisulpride"/>
</dbReference>
<dbReference type="DrugBank" id="DB00321">
    <property type="generic name" value="Amitriptyline"/>
</dbReference>
<dbReference type="DrugBank" id="DB01238">
    <property type="generic name" value="Aripiprazole"/>
</dbReference>
<dbReference type="DrugBank" id="DB00921">
    <property type="generic name" value="Buprenorphine"/>
</dbReference>
<dbReference type="DrugBank" id="DB00611">
    <property type="generic name" value="Butorphanol"/>
</dbReference>
<dbReference type="DrugBank" id="DB09173">
    <property type="generic name" value="Butyrfentanyl"/>
</dbReference>
<dbReference type="DrugBank" id="DB09061">
    <property type="generic name" value="Cannabidiol"/>
</dbReference>
<dbReference type="DrugBank" id="DB01535">
    <property type="generic name" value="Carfentanil"/>
</dbReference>
<dbReference type="DrugBank" id="DB00318">
    <property type="generic name" value="Codeine"/>
</dbReference>
<dbReference type="DrugBank" id="DB08856">
    <property type="generic name" value="DADLE"/>
</dbReference>
<dbReference type="DrugBank" id="DB00514">
    <property type="generic name" value="Dextromethorphan"/>
</dbReference>
<dbReference type="DrugBank" id="DB00647">
    <property type="generic name" value="Dextropropoxyphene"/>
</dbReference>
<dbReference type="DrugBank" id="DB01452">
    <property type="generic name" value="Diamorphine"/>
</dbReference>
<dbReference type="DrugBank" id="DB01565">
    <property type="generic name" value="Dihydromorphine"/>
</dbReference>
<dbReference type="DrugBank" id="DB19094">
    <property type="generic name" value="Dimepheptanol"/>
</dbReference>
<dbReference type="DrugBank" id="DB01444">
    <property type="generic name" value="Dimethylthiambutene"/>
</dbReference>
<dbReference type="DrugBank" id="DB01081">
    <property type="generic name" value="Diphenoxylate"/>
</dbReference>
<dbReference type="DrugBank" id="DB01548">
    <property type="generic name" value="Diprenorphine"/>
</dbReference>
<dbReference type="DrugBank" id="DB08861">
    <property type="generic name" value="DPDPE"/>
</dbReference>
<dbReference type="DrugBank" id="DB06121">
    <property type="generic name" value="DPI-221"/>
</dbReference>
<dbReference type="DrugBank" id="DB16146">
    <property type="generic name" value="Dynorphin"/>
</dbReference>
<dbReference type="DrugBank" id="DB09272">
    <property type="generic name" value="Eluxadoline"/>
</dbReference>
<dbReference type="DrugBank" id="DB01462">
    <property type="generic name" value="Etonitazene"/>
</dbReference>
<dbReference type="DrugBank" id="DB01497">
    <property type="generic name" value="Etorphine"/>
</dbReference>
<dbReference type="DrugBank" id="DB00813">
    <property type="generic name" value="Fentanyl"/>
</dbReference>
<dbReference type="DrugBank" id="DB00956">
    <property type="generic name" value="Hydrocodone"/>
</dbReference>
<dbReference type="DrugBank" id="DB00327">
    <property type="generic name" value="Hydromorphone"/>
</dbReference>
<dbReference type="DrugBank" id="DB01221">
    <property type="generic name" value="Ketamine"/>
</dbReference>
<dbReference type="DrugBank" id="DB06738">
    <property type="generic name" value="Ketobemidone"/>
</dbReference>
<dbReference type="DrugBank" id="DB00854">
    <property type="generic name" value="Levorphanol"/>
</dbReference>
<dbReference type="DrugBank" id="DB09174">
    <property type="generic name" value="Lofentanil"/>
</dbReference>
<dbReference type="DrugBank" id="DB00836">
    <property type="generic name" value="Loperamide"/>
</dbReference>
<dbReference type="DrugBank" id="DB14146">
    <property type="generic name" value="Loxicodegol"/>
</dbReference>
<dbReference type="DrugBank" id="DB14009">
    <property type="generic name" value="Medical Cannabis"/>
</dbReference>
<dbReference type="DrugBank" id="DB12668">
    <property type="generic name" value="Metenkefalin"/>
</dbReference>
<dbReference type="DrugBank" id="DB00333">
    <property type="generic name" value="Methadone"/>
</dbReference>
<dbReference type="DrugBank" id="DB00295">
    <property type="generic name" value="Morphine"/>
</dbReference>
<dbReference type="DrugBank" id="DB06409">
    <property type="generic name" value="Morphine glucuronide"/>
</dbReference>
<dbReference type="DrugBank" id="DB14011">
    <property type="generic name" value="Nabiximols"/>
</dbReference>
<dbReference type="DrugBank" id="DB00844">
    <property type="generic name" value="Nalbuphine"/>
</dbReference>
<dbReference type="DrugBank" id="DB11691">
    <property type="generic name" value="Naldemedine"/>
</dbReference>
<dbReference type="DrugBank" id="DB06230">
    <property type="generic name" value="Nalmefene"/>
</dbReference>
<dbReference type="DrugBank" id="DB01183">
    <property type="generic name" value="Naloxone"/>
</dbReference>
<dbReference type="DrugBank" id="DB00704">
    <property type="generic name" value="Naltrexone"/>
</dbReference>
<dbReference type="DrugBank" id="DB11130">
    <property type="generic name" value="Opium"/>
</dbReference>
<dbReference type="DrugBank" id="DB00497">
    <property type="generic name" value="Oxycodone"/>
</dbReference>
<dbReference type="DrugBank" id="DB01192">
    <property type="generic name" value="Oxymorphone"/>
</dbReference>
<dbReference type="DrugBank" id="DB09209">
    <property type="generic name" value="Pholcodine"/>
</dbReference>
<dbReference type="DrugBank" id="DB00899">
    <property type="generic name" value="Remifentanil"/>
</dbReference>
<dbReference type="DrugBank" id="DB12327">
    <property type="generic name" value="Salvinorin A"/>
</dbReference>
<dbReference type="DrugBank" id="DB12543">
    <property type="generic name" value="Samidorphan"/>
</dbReference>
<dbReference type="DrugBank" id="DB09099">
    <property type="generic name" value="Somatostatin"/>
</dbReference>
<dbReference type="DrugBank" id="DB00708">
    <property type="generic name" value="Sufentanil"/>
</dbReference>
<dbReference type="DrugBank" id="DB06204">
    <property type="generic name" value="Tapentadol"/>
</dbReference>
<dbReference type="DrugBank" id="DB00193">
    <property type="generic name" value="Tramadol"/>
</dbReference>
<dbReference type="DrugCentral" id="P41143"/>
<dbReference type="GuidetoPHARMACOLOGY" id="317"/>
<dbReference type="GlyCosmos" id="P41143">
    <property type="glycosylation" value="2 sites, No reported glycans"/>
</dbReference>
<dbReference type="GlyGen" id="P41143">
    <property type="glycosylation" value="2 sites"/>
</dbReference>
<dbReference type="iPTMnet" id="P41143"/>
<dbReference type="PhosphoSitePlus" id="P41143"/>
<dbReference type="BioMuta" id="OPRD1"/>
<dbReference type="DMDM" id="311033488"/>
<dbReference type="jPOST" id="P41143"/>
<dbReference type="MassIVE" id="P41143"/>
<dbReference type="PaxDb" id="9606-ENSP00000234961"/>
<dbReference type="PeptideAtlas" id="P41143"/>
<dbReference type="ProteomicsDB" id="55402"/>
<dbReference type="Antibodypedia" id="2932">
    <property type="antibodies" value="423 antibodies from 37 providers"/>
</dbReference>
<dbReference type="DNASU" id="4985"/>
<dbReference type="Ensembl" id="ENST00000234961.7">
    <property type="protein sequence ID" value="ENSP00000234961.2"/>
    <property type="gene ID" value="ENSG00000116329.12"/>
</dbReference>
<dbReference type="GeneID" id="4985"/>
<dbReference type="KEGG" id="hsa:4985"/>
<dbReference type="MANE-Select" id="ENST00000234961.7">
    <property type="protein sequence ID" value="ENSP00000234961.2"/>
    <property type="RefSeq nucleotide sequence ID" value="NM_000911.4"/>
    <property type="RefSeq protein sequence ID" value="NP_000902.3"/>
</dbReference>
<dbReference type="UCSC" id="uc001brf.2">
    <property type="organism name" value="human"/>
</dbReference>
<dbReference type="AGR" id="HGNC:8153"/>
<dbReference type="CTD" id="4985"/>
<dbReference type="DisGeNET" id="4985"/>
<dbReference type="GeneCards" id="OPRD1"/>
<dbReference type="HGNC" id="HGNC:8153">
    <property type="gene designation" value="OPRD1"/>
</dbReference>
<dbReference type="HPA" id="ENSG00000116329">
    <property type="expression patterns" value="Tissue enhanced (brain)"/>
</dbReference>
<dbReference type="MIM" id="165195">
    <property type="type" value="gene"/>
</dbReference>
<dbReference type="neXtProt" id="NX_P41143"/>
<dbReference type="OpenTargets" id="ENSG00000116329"/>
<dbReference type="PharmGKB" id="PA31942"/>
<dbReference type="VEuPathDB" id="HostDB:ENSG00000116329"/>
<dbReference type="eggNOG" id="KOG3656">
    <property type="taxonomic scope" value="Eukaryota"/>
</dbReference>
<dbReference type="GeneTree" id="ENSGT00940000157669"/>
<dbReference type="HOGENOM" id="CLU_009579_8_1_1"/>
<dbReference type="InParanoid" id="P41143"/>
<dbReference type="OMA" id="NGGNYTH"/>
<dbReference type="OrthoDB" id="6076970at2759"/>
<dbReference type="PAN-GO" id="P41143">
    <property type="GO annotations" value="6 GO annotations based on evolutionary models"/>
</dbReference>
<dbReference type="PhylomeDB" id="P41143"/>
<dbReference type="TreeFam" id="TF315737"/>
<dbReference type="PathwayCommons" id="P41143"/>
<dbReference type="Reactome" id="R-HSA-375276">
    <property type="pathway name" value="Peptide ligand-binding receptors"/>
</dbReference>
<dbReference type="Reactome" id="R-HSA-418594">
    <property type="pathway name" value="G alpha (i) signalling events"/>
</dbReference>
<dbReference type="Reactome" id="R-HSA-6785807">
    <property type="pathway name" value="Interleukin-4 and Interleukin-13 signaling"/>
</dbReference>
<dbReference type="SignaLink" id="P41143"/>
<dbReference type="SIGNOR" id="P41143"/>
<dbReference type="BioGRID-ORCS" id="4985">
    <property type="hits" value="14 hits in 1155 CRISPR screens"/>
</dbReference>
<dbReference type="ChiTaRS" id="OPRD1">
    <property type="organism name" value="human"/>
</dbReference>
<dbReference type="EvolutionaryTrace" id="P41143"/>
<dbReference type="GeneWiki" id="%CE%94-opioid_receptor"/>
<dbReference type="GenomeRNAi" id="4985"/>
<dbReference type="Pharos" id="P41143">
    <property type="development level" value="Tclin"/>
</dbReference>
<dbReference type="PRO" id="PR:P41143"/>
<dbReference type="Proteomes" id="UP000005640">
    <property type="component" value="Chromosome 1"/>
</dbReference>
<dbReference type="RNAct" id="P41143">
    <property type="molecule type" value="protein"/>
</dbReference>
<dbReference type="Bgee" id="ENSG00000116329">
    <property type="expression patterns" value="Expressed in endothelial cell and 48 other cell types or tissues"/>
</dbReference>
<dbReference type="ExpressionAtlas" id="P41143">
    <property type="expression patterns" value="baseline and differential"/>
</dbReference>
<dbReference type="GO" id="GO:0043679">
    <property type="term" value="C:axon terminus"/>
    <property type="evidence" value="ECO:0007669"/>
    <property type="project" value="Ensembl"/>
</dbReference>
<dbReference type="GO" id="GO:0032590">
    <property type="term" value="C:dendrite membrane"/>
    <property type="evidence" value="ECO:0007669"/>
    <property type="project" value="Ensembl"/>
</dbReference>
<dbReference type="GO" id="GO:0043005">
    <property type="term" value="C:neuron projection"/>
    <property type="evidence" value="ECO:0000318"/>
    <property type="project" value="GO_Central"/>
</dbReference>
<dbReference type="GO" id="GO:0098992">
    <property type="term" value="C:neuronal dense core vesicle"/>
    <property type="evidence" value="ECO:0007669"/>
    <property type="project" value="Ensembl"/>
</dbReference>
<dbReference type="GO" id="GO:0005886">
    <property type="term" value="C:plasma membrane"/>
    <property type="evidence" value="ECO:0000314"/>
    <property type="project" value="UniProtKB"/>
</dbReference>
<dbReference type="GO" id="GO:0098839">
    <property type="term" value="C:postsynaptic density membrane"/>
    <property type="evidence" value="ECO:0007669"/>
    <property type="project" value="Ensembl"/>
</dbReference>
<dbReference type="GO" id="GO:0042734">
    <property type="term" value="C:presynaptic membrane"/>
    <property type="evidence" value="ECO:0007669"/>
    <property type="project" value="Ensembl"/>
</dbReference>
<dbReference type="GO" id="GO:0097444">
    <property type="term" value="C:spine apparatus"/>
    <property type="evidence" value="ECO:0007669"/>
    <property type="project" value="Ensembl"/>
</dbReference>
<dbReference type="GO" id="GO:0030672">
    <property type="term" value="C:synaptic vesicle membrane"/>
    <property type="evidence" value="ECO:0007669"/>
    <property type="project" value="Ensembl"/>
</dbReference>
<dbReference type="GO" id="GO:0038046">
    <property type="term" value="F:G protein-coupled enkephalin receptor activity"/>
    <property type="evidence" value="ECO:0000315"/>
    <property type="project" value="UniProtKB"/>
</dbReference>
<dbReference type="GO" id="GO:0004985">
    <property type="term" value="F:G protein-coupled opioid receptor activity"/>
    <property type="evidence" value="ECO:0000314"/>
    <property type="project" value="UniProtKB"/>
</dbReference>
<dbReference type="GO" id="GO:0042923">
    <property type="term" value="F:neuropeptide binding"/>
    <property type="evidence" value="ECO:0000318"/>
    <property type="project" value="GO_Central"/>
</dbReference>
<dbReference type="GO" id="GO:0033612">
    <property type="term" value="F:receptor serine/threonine kinase binding"/>
    <property type="evidence" value="ECO:0007669"/>
    <property type="project" value="Ensembl"/>
</dbReference>
<dbReference type="GO" id="GO:0007193">
    <property type="term" value="P:adenylate cyclase-inhibiting G protein-coupled receptor signaling pathway"/>
    <property type="evidence" value="ECO:0007669"/>
    <property type="project" value="Ensembl"/>
</dbReference>
<dbReference type="GO" id="GO:0008344">
    <property type="term" value="P:adult locomotory behavior"/>
    <property type="evidence" value="ECO:0007669"/>
    <property type="project" value="Ensembl"/>
</dbReference>
<dbReference type="GO" id="GO:0071363">
    <property type="term" value="P:cellular response to growth factor stimulus"/>
    <property type="evidence" value="ECO:0007669"/>
    <property type="project" value="Ensembl"/>
</dbReference>
<dbReference type="GO" id="GO:0071456">
    <property type="term" value="P:cellular response to hypoxia"/>
    <property type="evidence" value="ECO:0000314"/>
    <property type="project" value="ParkinsonsUK-UCL"/>
</dbReference>
<dbReference type="GO" id="GO:0097237">
    <property type="term" value="P:cellular response to toxic substance"/>
    <property type="evidence" value="ECO:0000314"/>
    <property type="project" value="ParkinsonsUK-UCL"/>
</dbReference>
<dbReference type="GO" id="GO:0042755">
    <property type="term" value="P:eating behavior"/>
    <property type="evidence" value="ECO:0007669"/>
    <property type="project" value="Ensembl"/>
</dbReference>
<dbReference type="GO" id="GO:0038003">
    <property type="term" value="P:G protein-coupled opioid receptor signaling pathway"/>
    <property type="evidence" value="ECO:0000315"/>
    <property type="project" value="UniProtKB"/>
</dbReference>
<dbReference type="GO" id="GO:0007186">
    <property type="term" value="P:G protein-coupled receptor signaling pathway"/>
    <property type="evidence" value="ECO:0000314"/>
    <property type="project" value="UniProtKB"/>
</dbReference>
<dbReference type="GO" id="GO:0007187">
    <property type="term" value="P:G protein-coupled receptor signaling pathway, coupled to cyclic nucleotide second messenger"/>
    <property type="evidence" value="ECO:0000304"/>
    <property type="project" value="ProtInc"/>
</dbReference>
<dbReference type="GO" id="GO:0006955">
    <property type="term" value="P:immune response"/>
    <property type="evidence" value="ECO:0000304"/>
    <property type="project" value="ProtInc"/>
</dbReference>
<dbReference type="GO" id="GO:0010629">
    <property type="term" value="P:negative regulation of gene expression"/>
    <property type="evidence" value="ECO:0000314"/>
    <property type="project" value="ParkinsonsUK-UCL"/>
</dbReference>
<dbReference type="GO" id="GO:0031333">
    <property type="term" value="P:negative regulation of protein-containing complex assembly"/>
    <property type="evidence" value="ECO:0000314"/>
    <property type="project" value="ParkinsonsUK-UCL"/>
</dbReference>
<dbReference type="GO" id="GO:0007218">
    <property type="term" value="P:neuropeptide signaling pathway"/>
    <property type="evidence" value="ECO:0000318"/>
    <property type="project" value="GO_Central"/>
</dbReference>
<dbReference type="GO" id="GO:0007200">
    <property type="term" value="P:phospholipase C-activating G protein-coupled receptor signaling pathway"/>
    <property type="evidence" value="ECO:0000250"/>
    <property type="project" value="UniProtKB"/>
</dbReference>
<dbReference type="GO" id="GO:0051924">
    <property type="term" value="P:regulation of calcium ion transport"/>
    <property type="evidence" value="ECO:0007669"/>
    <property type="project" value="Ensembl"/>
</dbReference>
<dbReference type="GO" id="GO:0051881">
    <property type="term" value="P:regulation of mitochondrial membrane potential"/>
    <property type="evidence" value="ECO:0000314"/>
    <property type="project" value="ParkinsonsUK-UCL"/>
</dbReference>
<dbReference type="GO" id="GO:0045471">
    <property type="term" value="P:response to ethanol"/>
    <property type="evidence" value="ECO:0007669"/>
    <property type="project" value="Ensembl"/>
</dbReference>
<dbReference type="GO" id="GO:0035094">
    <property type="term" value="P:response to nicotine"/>
    <property type="evidence" value="ECO:0007669"/>
    <property type="project" value="Ensembl"/>
</dbReference>
<dbReference type="CDD" id="cd15089">
    <property type="entry name" value="7tmA_Delta_opioid_R"/>
    <property type="match status" value="1"/>
</dbReference>
<dbReference type="FunFam" id="1.20.1070.10:FF:000014">
    <property type="entry name" value="Kappa-type opioid receptor 1"/>
    <property type="match status" value="1"/>
</dbReference>
<dbReference type="Gene3D" id="1.20.1070.10">
    <property type="entry name" value="Rhodopsin 7-helix transmembrane proteins"/>
    <property type="match status" value="1"/>
</dbReference>
<dbReference type="InterPro" id="IPR000321">
    <property type="entry name" value="Delta_opi_rcpt"/>
</dbReference>
<dbReference type="InterPro" id="IPR000276">
    <property type="entry name" value="GPCR_Rhodpsn"/>
</dbReference>
<dbReference type="InterPro" id="IPR017452">
    <property type="entry name" value="GPCR_Rhodpsn_7TM"/>
</dbReference>
<dbReference type="InterPro" id="IPR001418">
    <property type="entry name" value="Opioid_rcpt"/>
</dbReference>
<dbReference type="PANTHER" id="PTHR24229:SF2">
    <property type="entry name" value="DELTA-TYPE OPIOID RECEPTOR"/>
    <property type="match status" value="1"/>
</dbReference>
<dbReference type="PANTHER" id="PTHR24229">
    <property type="entry name" value="NEUROPEPTIDES RECEPTOR"/>
    <property type="match status" value="1"/>
</dbReference>
<dbReference type="Pfam" id="PF00001">
    <property type="entry name" value="7tm_1"/>
    <property type="match status" value="1"/>
</dbReference>
<dbReference type="PRINTS" id="PR00525">
    <property type="entry name" value="DELTAOPIOIDR"/>
</dbReference>
<dbReference type="PRINTS" id="PR00237">
    <property type="entry name" value="GPCRRHODOPSN"/>
</dbReference>
<dbReference type="PRINTS" id="PR00384">
    <property type="entry name" value="OPIOIDR"/>
</dbReference>
<dbReference type="SMART" id="SM01381">
    <property type="entry name" value="7TM_GPCR_Srsx"/>
    <property type="match status" value="1"/>
</dbReference>
<dbReference type="SUPFAM" id="SSF81321">
    <property type="entry name" value="Family A G protein-coupled receptor-like"/>
    <property type="match status" value="1"/>
</dbReference>
<dbReference type="PROSITE" id="PS00237">
    <property type="entry name" value="G_PROTEIN_RECEP_F1_1"/>
    <property type="match status" value="1"/>
</dbReference>
<dbReference type="PROSITE" id="PS50262">
    <property type="entry name" value="G_PROTEIN_RECEP_F1_2"/>
    <property type="match status" value="1"/>
</dbReference>
<evidence type="ECO:0000250" key="1"/>
<evidence type="ECO:0000250" key="2">
    <source>
        <dbReference type="UniProtKB" id="P32300"/>
    </source>
</evidence>
<evidence type="ECO:0000255" key="3"/>
<evidence type="ECO:0000255" key="4">
    <source>
        <dbReference type="PROSITE-ProRule" id="PRU00521"/>
    </source>
</evidence>
<evidence type="ECO:0000256" key="5">
    <source>
        <dbReference type="SAM" id="MobiDB-lite"/>
    </source>
</evidence>
<evidence type="ECO:0000269" key="6">
    <source>
    </source>
</evidence>
<evidence type="ECO:0000269" key="7">
    <source>
    </source>
</evidence>
<evidence type="ECO:0000269" key="8">
    <source>
    </source>
</evidence>
<evidence type="ECO:0000269" key="9">
    <source>
    </source>
</evidence>
<evidence type="ECO:0000269" key="10">
    <source>
    </source>
</evidence>
<evidence type="ECO:0000269" key="11">
    <source>
    </source>
</evidence>
<evidence type="ECO:0000269" key="12">
    <source>
    </source>
</evidence>
<evidence type="ECO:0000269" key="13">
    <source ref="4"/>
</evidence>
<evidence type="ECO:0007829" key="14">
    <source>
        <dbReference type="PDB" id="4N6H"/>
    </source>
</evidence>
<organism>
    <name type="scientific">Homo sapiens</name>
    <name type="common">Human</name>
    <dbReference type="NCBI Taxonomy" id="9606"/>
    <lineage>
        <taxon>Eukaryota</taxon>
        <taxon>Metazoa</taxon>
        <taxon>Chordata</taxon>
        <taxon>Craniata</taxon>
        <taxon>Vertebrata</taxon>
        <taxon>Euteleostomi</taxon>
        <taxon>Mammalia</taxon>
        <taxon>Eutheria</taxon>
        <taxon>Euarchontoglires</taxon>
        <taxon>Primates</taxon>
        <taxon>Haplorrhini</taxon>
        <taxon>Catarrhini</taxon>
        <taxon>Hominidae</taxon>
        <taxon>Homo</taxon>
    </lineage>
</organism>
<protein>
    <recommendedName>
        <fullName>Delta-type opioid receptor</fullName>
        <shortName>D-OR-1</shortName>
        <shortName>DOR-1</shortName>
    </recommendedName>
</protein>
<gene>
    <name type="primary">OPRD1</name>
    <name type="synonym">OPRD</name>
</gene>
<comment type="function">
    <text evidence="9 11 12">G-protein coupled receptor that functions as a receptor for endogenous enkephalins and for a subset of other opioids. Ligand binding causes a conformation change that triggers signaling via guanine nucleotide-binding proteins (G proteins) and modulates the activity of down-stream effectors, such as adenylate cyclase. Signaling leads to the inhibition of adenylate cyclase activity. Inhibits neurotransmitter release by reducing calcium ion currents and increasing potassium ion conductance. Plays a role in the perception of pain and in opiate-mediated analgesia. Plays a role in developing analgesic tolerance to morphine.</text>
</comment>
<comment type="subunit">
    <text evidence="2 7 8 9">May form homooligomers. Forms a heterodimer with OPRM1 (By similarity). Interacts with GPRASP1 (PubMed:12142540, PubMed:15086532). Interacts with RTP4; the interaction promotes cell surface localization of the OPRD1-OPRM1 heterodimer (By similarity).</text>
</comment>
<comment type="interaction">
    <interactant intactId="EBI-2624456">
        <id>P41143</id>
    </interactant>
    <interactant intactId="EBI-358933">
        <id>P16615</id>
        <label>ATP2A2</label>
    </interactant>
    <organismsDiffer>false</organismsDiffer>
    <experiments>3</experiments>
</comment>
<comment type="interaction">
    <interactant intactId="EBI-2624456">
        <id>P41143</id>
    </interactant>
    <interactant intactId="EBI-355947">
        <id>P27824</id>
        <label>CANX</label>
    </interactant>
    <organismsDiffer>false</organismsDiffer>
    <experiments>2</experiments>
</comment>
<comment type="interaction">
    <interactant intactId="EBI-2624456">
        <id>P41143</id>
    </interactant>
    <interactant intactId="EBI-12019274">
        <id>Q4LDR2</id>
        <label>CTXN3</label>
    </interactant>
    <organismsDiffer>false</organismsDiffer>
    <experiments>3</experiments>
</comment>
<comment type="interaction">
    <interactant intactId="EBI-2624456">
        <id>P41143</id>
    </interactant>
    <interactant intactId="EBI-2514717">
        <id>Q5JY77</id>
        <label>GPRASP1</label>
    </interactant>
    <organismsDiffer>false</organismsDiffer>
    <experiments>2</experiments>
</comment>
<comment type="interaction">
    <interactant intactId="EBI-2624456">
        <id>P41143</id>
    </interactant>
    <interactant intactId="EBI-1052363">
        <id>Q9NS64</id>
        <label>RPRM</label>
    </interactant>
    <organismsDiffer>false</organismsDiffer>
    <experiments>3</experiments>
</comment>
<comment type="interaction">
    <interactant intactId="EBI-2624456">
        <id>P41143</id>
    </interactant>
    <interactant intactId="EBI-12854384">
        <id>Q9Y666-2</id>
        <label>SLC12A7</label>
    </interactant>
    <organismsDiffer>false</organismsDiffer>
    <experiments>3</experiments>
</comment>
<comment type="interaction">
    <interactant intactId="EBI-2624456">
        <id>P41143</id>
    </interactant>
    <interactant intactId="EBI-12808018">
        <id>Q9UKG4</id>
        <label>SLC13A4</label>
    </interactant>
    <organismsDiffer>false</organismsDiffer>
    <experiments>3</experiments>
</comment>
<comment type="interaction">
    <interactant intactId="EBI-2624456">
        <id>P41143</id>
    </interactant>
    <interactant intactId="EBI-10226799">
        <id>Q0VAQ4</id>
        <label>SMAGP</label>
    </interactant>
    <organismsDiffer>false</organismsDiffer>
    <experiments>3</experiments>
</comment>
<comment type="interaction">
    <interactant intactId="EBI-2624456">
        <id>P41143</id>
    </interactant>
    <interactant intactId="EBI-10982110">
        <id>Q96Q45-2</id>
        <label>TMEM237</label>
    </interactant>
    <organismsDiffer>false</organismsDiffer>
    <experiments>3</experiments>
</comment>
<comment type="interaction">
    <interactant intactId="EBI-2624456">
        <id>P41143</id>
    </interactant>
    <interactant intactId="EBI-8004986">
        <id>P11607</id>
        <label>ATP2A2</label>
    </interactant>
    <organismsDiffer>true</organismsDiffer>
    <experiments>2</experiments>
</comment>
<comment type="subcellular location">
    <subcellularLocation>
        <location evidence="9 11 12">Cell membrane</location>
        <topology evidence="9 11 12">Multi-pass membrane protein</topology>
    </subcellularLocation>
</comment>
<comment type="tissue specificity">
    <text evidence="10 11">Detected in oocytes (at protein level). Detected in brain cortex, hypothalamus, hippocampus and olfactory bulb. Detected in oocytes.</text>
</comment>
<comment type="PTM">
    <text evidence="9">N-glycosylated.</text>
</comment>
<comment type="PTM">
    <text evidence="2">Ubiquitinated. A basal ubiquitination seems not to be related to degradation. Ubiquitination is increased upon formation of OPRM1:OPRD1 oligomers leading to proteasomal degradation; the ubiquitination is diminished by RTP4.</text>
</comment>
<comment type="similarity">
    <text evidence="4">Belongs to the G-protein coupled receptor 1 family.</text>
</comment>
<comment type="online information" name="Wikipedia">
    <link uri="https://en.wikipedia.org/wiki/Delta_opioid_receptor"/>
    <text>Delta opioid receptor entry</text>
</comment>
<proteinExistence type="evidence at protein level"/>
<sequence>MEPAPSAGAELQPPLFANASDAYPSACPSAGANASGPPGARSASSLALAIAITALYSAVCAVGLLGNVLVMFGIVRYTKMKTATNIYIFNLALADALATSTLPFQSAKYLMETWPFGELLCKAVLSIDYYNMFTSIFTLTMMSVDRYIAVCHPVKALDFRTPAKAKLINICIWVLASGVGVPIMVMAVTRPRDGAVVCMLQFPSPSWYWDTVTKICVFLFAFVVPILIITVCYGLMLLRLRSVRLLSGSKEKDRSLRRITRMVLVVVGAFVVCWAPIHIFVIVWTLVDIDRRDPLVVAALHLCIALGYANSSLNPVLYAFLDENFKRCFRQLCRKPCGRPDPSSFSRAREATARERVTACTPSDGPGGGAAA</sequence>